<proteinExistence type="inferred from homology"/>
<evidence type="ECO:0000255" key="1">
    <source>
        <dbReference type="HAMAP-Rule" id="MF_00185"/>
    </source>
</evidence>
<dbReference type="EC" id="2.5.1.75" evidence="1"/>
<dbReference type="EMBL" id="FM204883">
    <property type="protein sequence ID" value="CAW94304.1"/>
    <property type="molecule type" value="Genomic_DNA"/>
</dbReference>
<dbReference type="RefSeq" id="WP_012679749.1">
    <property type="nucleotide sequence ID" value="NC_012471.1"/>
</dbReference>
<dbReference type="SMR" id="C0MAN2"/>
<dbReference type="KEGG" id="seu:SEQ_1432"/>
<dbReference type="HOGENOM" id="CLU_032616_0_1_9"/>
<dbReference type="OrthoDB" id="9776390at2"/>
<dbReference type="Proteomes" id="UP000001365">
    <property type="component" value="Chromosome"/>
</dbReference>
<dbReference type="GO" id="GO:0005524">
    <property type="term" value="F:ATP binding"/>
    <property type="evidence" value="ECO:0007669"/>
    <property type="project" value="UniProtKB-UniRule"/>
</dbReference>
<dbReference type="GO" id="GO:0052381">
    <property type="term" value="F:tRNA dimethylallyltransferase activity"/>
    <property type="evidence" value="ECO:0007669"/>
    <property type="project" value="UniProtKB-UniRule"/>
</dbReference>
<dbReference type="GO" id="GO:0006400">
    <property type="term" value="P:tRNA modification"/>
    <property type="evidence" value="ECO:0007669"/>
    <property type="project" value="TreeGrafter"/>
</dbReference>
<dbReference type="Gene3D" id="3.40.50.300">
    <property type="entry name" value="P-loop containing nucleotide triphosphate hydrolases"/>
    <property type="match status" value="1"/>
</dbReference>
<dbReference type="HAMAP" id="MF_00185">
    <property type="entry name" value="IPP_trans"/>
    <property type="match status" value="1"/>
</dbReference>
<dbReference type="InterPro" id="IPR039657">
    <property type="entry name" value="Dimethylallyltransferase"/>
</dbReference>
<dbReference type="InterPro" id="IPR018022">
    <property type="entry name" value="IPT"/>
</dbReference>
<dbReference type="InterPro" id="IPR027417">
    <property type="entry name" value="P-loop_NTPase"/>
</dbReference>
<dbReference type="NCBIfam" id="TIGR00174">
    <property type="entry name" value="miaA"/>
    <property type="match status" value="1"/>
</dbReference>
<dbReference type="PANTHER" id="PTHR11088">
    <property type="entry name" value="TRNA DIMETHYLALLYLTRANSFERASE"/>
    <property type="match status" value="1"/>
</dbReference>
<dbReference type="PANTHER" id="PTHR11088:SF60">
    <property type="entry name" value="TRNA DIMETHYLALLYLTRANSFERASE"/>
    <property type="match status" value="1"/>
</dbReference>
<dbReference type="Pfam" id="PF01715">
    <property type="entry name" value="IPPT"/>
    <property type="match status" value="1"/>
</dbReference>
<dbReference type="SUPFAM" id="SSF52540">
    <property type="entry name" value="P-loop containing nucleoside triphosphate hydrolases"/>
    <property type="match status" value="2"/>
</dbReference>
<accession>C0MAN2</accession>
<reference key="1">
    <citation type="journal article" date="2009" name="PLoS Pathog.">
        <title>Genomic evidence for the evolution of Streptococcus equi: host restriction, increased virulence, and genetic exchange with human pathogens.</title>
        <authorList>
            <person name="Holden M.T.G."/>
            <person name="Heather Z."/>
            <person name="Paillot R."/>
            <person name="Steward K.F."/>
            <person name="Webb K."/>
            <person name="Ainslie F."/>
            <person name="Jourdan T."/>
            <person name="Bason N.C."/>
            <person name="Holroyd N.E."/>
            <person name="Mungall K."/>
            <person name="Quail M.A."/>
            <person name="Sanders M."/>
            <person name="Simmonds M."/>
            <person name="Willey D."/>
            <person name="Brooks K."/>
            <person name="Aanensen D.M."/>
            <person name="Spratt B.G."/>
            <person name="Jolley K.A."/>
            <person name="Maiden M.C.J."/>
            <person name="Kehoe M."/>
            <person name="Chanter N."/>
            <person name="Bentley S.D."/>
            <person name="Robinson C."/>
            <person name="Maskell D.J."/>
            <person name="Parkhill J."/>
            <person name="Waller A.S."/>
        </authorList>
    </citation>
    <scope>NUCLEOTIDE SEQUENCE [LARGE SCALE GENOMIC DNA]</scope>
    <source>
        <strain>4047</strain>
    </source>
</reference>
<protein>
    <recommendedName>
        <fullName evidence="1">tRNA dimethylallyltransferase</fullName>
        <ecNumber evidence="1">2.5.1.75</ecNumber>
    </recommendedName>
    <alternativeName>
        <fullName evidence="1">Dimethylallyl diphosphate:tRNA dimethylallyltransferase</fullName>
        <shortName evidence="1">DMAPP:tRNA dimethylallyltransferase</shortName>
        <shortName evidence="1">DMATase</shortName>
    </alternativeName>
    <alternativeName>
        <fullName evidence="1">Isopentenyl-diphosphate:tRNA isopentenyltransferase</fullName>
        <shortName evidence="1">IPP transferase</shortName>
        <shortName evidence="1">IPPT</shortName>
        <shortName evidence="1">IPTase</shortName>
    </alternativeName>
</protein>
<comment type="function">
    <text evidence="1">Catalyzes the transfer of a dimethylallyl group onto the adenine at position 37 in tRNAs that read codons beginning with uridine, leading to the formation of N6-(dimethylallyl)adenosine (i(6)A).</text>
</comment>
<comment type="catalytic activity">
    <reaction evidence="1">
        <text>adenosine(37) in tRNA + dimethylallyl diphosphate = N(6)-dimethylallyladenosine(37) in tRNA + diphosphate</text>
        <dbReference type="Rhea" id="RHEA:26482"/>
        <dbReference type="Rhea" id="RHEA-COMP:10162"/>
        <dbReference type="Rhea" id="RHEA-COMP:10375"/>
        <dbReference type="ChEBI" id="CHEBI:33019"/>
        <dbReference type="ChEBI" id="CHEBI:57623"/>
        <dbReference type="ChEBI" id="CHEBI:74411"/>
        <dbReference type="ChEBI" id="CHEBI:74415"/>
        <dbReference type="EC" id="2.5.1.75"/>
    </reaction>
</comment>
<comment type="cofactor">
    <cofactor evidence="1">
        <name>Mg(2+)</name>
        <dbReference type="ChEBI" id="CHEBI:18420"/>
    </cofactor>
</comment>
<comment type="subunit">
    <text evidence="1">Monomer.</text>
</comment>
<comment type="similarity">
    <text evidence="1">Belongs to the IPP transferase family.</text>
</comment>
<sequence>MTKEKIIVIVGPTAVGKTALGIALAGAFNGEIISGDSQQVYRHLDIGTAKASAREQALAVHHLIDIREVTESYSAFDFVQDAKRAIEDIVSRGKLPIIVGGTGLYLQSLLEGYHLGGDLDQKELLAYRQQLETLTDTELYQLLASKGIHLDQVNRRRAIRSLELNQFARDLENQEAPYNPLIIGLTDEREVIYERINKRVDLMMASGLLEEARWLFEQYPAVQASRGIGYKELFPYFQGQASLEEATATLKQQTRRFAKRQLTWFRNRMAVRFDSISESSYPQAIYDRVERFLKEP</sequence>
<feature type="chain" id="PRO_1000191866" description="tRNA dimethylallyltransferase">
    <location>
        <begin position="1"/>
        <end position="296"/>
    </location>
</feature>
<feature type="region of interest" description="Interaction with substrate tRNA" evidence="1">
    <location>
        <begin position="36"/>
        <end position="39"/>
    </location>
</feature>
<feature type="binding site" evidence="1">
    <location>
        <begin position="11"/>
        <end position="18"/>
    </location>
    <ligand>
        <name>ATP</name>
        <dbReference type="ChEBI" id="CHEBI:30616"/>
    </ligand>
</feature>
<feature type="binding site" evidence="1">
    <location>
        <begin position="13"/>
        <end position="18"/>
    </location>
    <ligand>
        <name>substrate</name>
    </ligand>
</feature>
<feature type="site" description="Interaction with substrate tRNA" evidence="1">
    <location>
        <position position="102"/>
    </location>
</feature>
<feature type="site" description="Interaction with substrate tRNA" evidence="1">
    <location>
        <position position="128"/>
    </location>
</feature>
<organism>
    <name type="scientific">Streptococcus equi subsp. equi (strain 4047)</name>
    <dbReference type="NCBI Taxonomy" id="553482"/>
    <lineage>
        <taxon>Bacteria</taxon>
        <taxon>Bacillati</taxon>
        <taxon>Bacillota</taxon>
        <taxon>Bacilli</taxon>
        <taxon>Lactobacillales</taxon>
        <taxon>Streptococcaceae</taxon>
        <taxon>Streptococcus</taxon>
    </lineage>
</organism>
<keyword id="KW-0067">ATP-binding</keyword>
<keyword id="KW-0460">Magnesium</keyword>
<keyword id="KW-0547">Nucleotide-binding</keyword>
<keyword id="KW-0808">Transferase</keyword>
<keyword id="KW-0819">tRNA processing</keyword>
<gene>
    <name evidence="1" type="primary">miaA</name>
    <name type="ordered locus">SEQ_1432</name>
</gene>
<name>MIAA_STRE4</name>